<name>RGR_HUMAN</name>
<keyword id="KW-0025">Alternative splicing</keyword>
<keyword id="KW-0157">Chromophore</keyword>
<keyword id="KW-0225">Disease variant</keyword>
<keyword id="KW-1015">Disulfide bond</keyword>
<keyword id="KW-0297">G-protein coupled receptor</keyword>
<keyword id="KW-0325">Glycoprotein</keyword>
<keyword id="KW-0472">Membrane</keyword>
<keyword id="KW-0600">Photoreceptor protein</keyword>
<keyword id="KW-1267">Proteomics identification</keyword>
<keyword id="KW-0675">Receptor</keyword>
<keyword id="KW-1185">Reference proteome</keyword>
<keyword id="KW-0681">Retinal protein</keyword>
<keyword id="KW-0682">Retinitis pigmentosa</keyword>
<keyword id="KW-0716">Sensory transduction</keyword>
<keyword id="KW-0807">Transducer</keyword>
<keyword id="KW-0812">Transmembrane</keyword>
<keyword id="KW-1133">Transmembrane helix</keyword>
<keyword id="KW-0844">Vision</keyword>
<sequence length="291" mass="31874">MAETSALPTGFGELEVLAVGMVLLVEALSGLSLNTLTIFSFCKTPELRTPCHLLVLSLALADSGISLNALVAATSSLLRRWPYGSDGCQAHGFQGFVTALASICSSAAIAWGRYHHYCTRSQLAWNSAVSLVLFVWLSSAFWAALPLLGWGHYDYEPLGTCCTLDYSKGDRNFTSFLFTMSFFNFAMPLFITITSYSLMEQKLGKSGHLQVNTTLPARTLLLGWGPYAILYLYAVIADVTSISPKLQMVPALIAKMVPTINAINYALGNEMVCRGIWQCLSPQKREKDRTK</sequence>
<accession>P47804</accession>
<accession>A6NKK7</accession>
<accession>Q96FC5</accession>
<protein>
    <recommendedName>
        <fullName>RPE-retinal G protein-coupled receptor</fullName>
    </recommendedName>
</protein>
<comment type="function">
    <text>Receptor for all-trans- and 11-cis-retinal. Binds preferentially to the former and may catalyze the isomerization of the chromophore by a retinochrome-like mechanism.</text>
</comment>
<comment type="interaction">
    <interactant intactId="EBI-745818">
        <id>P47804</id>
    </interactant>
    <interactant intactId="EBI-744150">
        <id>Q96EK5</id>
        <label>KIFBP</label>
    </interactant>
    <organismsDiffer>false</organismsDiffer>
    <experiments>2</experiments>
</comment>
<comment type="interaction">
    <interactant intactId="EBI-25834767">
        <id>P47804-3</id>
    </interactant>
    <interactant intactId="EBI-10988864">
        <id>P46379-2</id>
        <label>BAG6</label>
    </interactant>
    <organismsDiffer>false</organismsDiffer>
    <experiments>3</experiments>
</comment>
<comment type="interaction">
    <interactant intactId="EBI-25834767">
        <id>P47804-3</id>
    </interactant>
    <interactant intactId="EBI-718729">
        <id>P55212</id>
        <label>CASP6</label>
    </interactant>
    <organismsDiffer>false</organismsDiffer>
    <experiments>3</experiments>
</comment>
<comment type="interaction">
    <interactant intactId="EBI-25834767">
        <id>P47804-3</id>
    </interactant>
    <interactant intactId="EBI-6624398">
        <id>P06307</id>
        <label>CCK</label>
    </interactant>
    <organismsDiffer>false</organismsDiffer>
    <experiments>3</experiments>
</comment>
<comment type="interaction">
    <interactant intactId="EBI-25834767">
        <id>P47804-3</id>
    </interactant>
    <interactant intactId="EBI-25837549">
        <id>P28329-3</id>
        <label>CHAT</label>
    </interactant>
    <organismsDiffer>false</organismsDiffer>
    <experiments>3</experiments>
</comment>
<comment type="interaction">
    <interactant intactId="EBI-25834767">
        <id>P47804-3</id>
    </interactant>
    <interactant intactId="EBI-745535">
        <id>Q8NI60</id>
        <label>COQ8A</label>
    </interactant>
    <organismsDiffer>false</organismsDiffer>
    <experiments>3</experiments>
</comment>
<comment type="interaction">
    <interactant intactId="EBI-25834767">
        <id>P47804-3</id>
    </interactant>
    <interactant intactId="EBI-6875961">
        <id>P02489</id>
        <label>CRYAA</label>
    </interactant>
    <organismsDiffer>false</organismsDiffer>
    <experiments>3</experiments>
</comment>
<comment type="interaction">
    <interactant intactId="EBI-25834767">
        <id>P47804-3</id>
    </interactant>
    <interactant intactId="EBI-10976677">
        <id>G5E9A7</id>
        <label>DMWD</label>
    </interactant>
    <organismsDiffer>false</organismsDiffer>
    <experiments>3</experiments>
</comment>
<comment type="interaction">
    <interactant intactId="EBI-25834767">
        <id>P47804-3</id>
    </interactant>
    <interactant intactId="EBI-395638">
        <id>O14645</id>
        <label>DNALI1</label>
    </interactant>
    <organismsDiffer>false</organismsDiffer>
    <experiments>3</experiments>
</comment>
<comment type="interaction">
    <interactant intactId="EBI-25834767">
        <id>P47804-3</id>
    </interactant>
    <interactant intactId="EBI-348399">
        <id>P22607</id>
        <label>FGFR3</label>
    </interactant>
    <organismsDiffer>false</organismsDiffer>
    <experiments>3</experiments>
</comment>
<comment type="interaction">
    <interactant intactId="EBI-25834767">
        <id>P47804-3</id>
    </interactant>
    <interactant intactId="EBI-8285963">
        <id>Q14957</id>
        <label>GRIN2C</label>
    </interactant>
    <organismsDiffer>false</organismsDiffer>
    <experiments>3</experiments>
</comment>
<comment type="interaction">
    <interactant intactId="EBI-25834767">
        <id>P47804-3</id>
    </interactant>
    <interactant intactId="EBI-351506">
        <id>P06396</id>
        <label>GSN</label>
    </interactant>
    <organismsDiffer>false</organismsDiffer>
    <experiments>3</experiments>
</comment>
<comment type="interaction">
    <interactant intactId="EBI-25834767">
        <id>P47804-3</id>
    </interactant>
    <interactant intactId="EBI-473886">
        <id>O00291</id>
        <label>HIP1</label>
    </interactant>
    <organismsDiffer>false</organismsDiffer>
    <experiments>3</experiments>
</comment>
<comment type="interaction">
    <interactant intactId="EBI-25834767">
        <id>P47804-3</id>
    </interactant>
    <interactant intactId="EBI-948266">
        <id>O14901</id>
        <label>KLF11</label>
    </interactant>
    <organismsDiffer>false</organismsDiffer>
    <experiments>3</experiments>
</comment>
<comment type="interaction">
    <interactant intactId="EBI-25834767">
        <id>P47804-3</id>
    </interactant>
    <interactant intactId="EBI-2432309">
        <id>Q92876</id>
        <label>KLK6</label>
    </interactant>
    <organismsDiffer>false</organismsDiffer>
    <experiments>3</experiments>
</comment>
<comment type="interaction">
    <interactant intactId="EBI-25834767">
        <id>P47804-3</id>
    </interactant>
    <interactant intactId="EBI-21591415">
        <id>P13473-2</id>
        <label>LAMP2</label>
    </interactant>
    <organismsDiffer>false</organismsDiffer>
    <experiments>3</experiments>
</comment>
<comment type="interaction">
    <interactant intactId="EBI-25834767">
        <id>P47804-3</id>
    </interactant>
    <interactant intactId="EBI-2811583">
        <id>Q9BVL2</id>
        <label>NUP58</label>
    </interactant>
    <organismsDiffer>false</organismsDiffer>
    <experiments>3</experiments>
</comment>
<comment type="interaction">
    <interactant intactId="EBI-25834767">
        <id>P47804-3</id>
    </interactant>
    <interactant intactId="EBI-50433196">
        <id>A0A6Q8PF08</id>
        <label>PMP22</label>
    </interactant>
    <organismsDiffer>false</organismsDiffer>
    <experiments>3</experiments>
</comment>
<comment type="interaction">
    <interactant intactId="EBI-25834767">
        <id>P47804-3</id>
    </interactant>
    <interactant intactId="EBI-286642">
        <id>P62826</id>
        <label>RAN</label>
    </interactant>
    <organismsDiffer>false</organismsDiffer>
    <experiments>3</experiments>
</comment>
<comment type="interaction">
    <interactant intactId="EBI-25834767">
        <id>P47804-3</id>
    </interactant>
    <interactant intactId="EBI-5235340">
        <id>Q7Z699</id>
        <label>SPRED1</label>
    </interactant>
    <organismsDiffer>false</organismsDiffer>
    <experiments>3</experiments>
</comment>
<comment type="interaction">
    <interactant intactId="EBI-25834767">
        <id>P47804-3</id>
    </interactant>
    <interactant intactId="EBI-12806590">
        <id>Q86WV8</id>
        <label>TSC1</label>
    </interactant>
    <organismsDiffer>false</organismsDiffer>
    <experiments>3</experiments>
</comment>
<comment type="interaction">
    <interactant intactId="EBI-25834767">
        <id>P47804-3</id>
    </interactant>
    <interactant intactId="EBI-741480">
        <id>Q9UMX0</id>
        <label>UBQLN1</label>
    </interactant>
    <organismsDiffer>false</organismsDiffer>
    <experiments>3</experiments>
</comment>
<comment type="interaction">
    <interactant intactId="EBI-25834767">
        <id>P47804-3</id>
    </interactant>
    <interactant intactId="EBI-25900580">
        <id>Q9Y649</id>
    </interactant>
    <organismsDiffer>false</organismsDiffer>
    <experiments>3</experiments>
</comment>
<comment type="subcellular location">
    <subcellularLocation>
        <location>Membrane</location>
        <topology>Multi-pass membrane protein</topology>
    </subcellularLocation>
</comment>
<comment type="alternative products">
    <event type="alternative splicing"/>
    <isoform>
        <id>P47804-1</id>
        <name>1</name>
        <name>Short</name>
        <sequence type="displayed"/>
    </isoform>
    <isoform>
        <id>P47804-2</id>
        <name>2</name>
        <name>Long</name>
        <sequence type="described" ref="VSP_003773"/>
    </isoform>
    <isoform>
        <id>P47804-3</id>
        <name>3</name>
        <sequence type="described" ref="VSP_038387"/>
    </isoform>
</comment>
<comment type="tissue specificity">
    <text>Preferentially expressed at high levels in the retinal pigment epithelium (RPE) and Mueller cells of the neural retina.</text>
</comment>
<comment type="PTM">
    <text>Covalently binds all-trans- and 11-cis-retinal.</text>
</comment>
<comment type="disease" evidence="4">
    <disease id="DI-03033">
        <name>Retinitis pigmentosa 44</name>
        <acronym>RP44</acronym>
        <description>A retinal dystrophy belonging to the group of pigmentary retinopathies. Retinitis pigmentosa is characterized by retinal pigment deposits visible on fundus examination and primary loss of rod photoreceptor cells followed by secondary loss of cone photoreceptors. Patients typically have night vision blindness and loss of midperipheral visual field. As their condition progresses, they lose their far peripheral visual field and eventually central vision as well.</description>
        <dbReference type="MIM" id="613769"/>
    </disease>
    <text>The disease is caused by variants affecting the gene represented in this entry.</text>
</comment>
<comment type="similarity">
    <text evidence="3">Belongs to the G-protein coupled receptor 1 family. Opsin subfamily.</text>
</comment>
<evidence type="ECO:0000250" key="1"/>
<evidence type="ECO:0000255" key="2"/>
<evidence type="ECO:0000255" key="3">
    <source>
        <dbReference type="PROSITE-ProRule" id="PRU00521"/>
    </source>
</evidence>
<evidence type="ECO:0000269" key="4">
    <source>
    </source>
</evidence>
<evidence type="ECO:0000303" key="5">
    <source>
    </source>
</evidence>
<evidence type="ECO:0000303" key="6">
    <source>
    </source>
</evidence>
<dbReference type="EMBL" id="U15790">
    <property type="protein sequence ID" value="AAB92384.1"/>
    <property type="molecule type" value="Genomic_DNA"/>
</dbReference>
<dbReference type="EMBL" id="U14911">
    <property type="protein sequence ID" value="AAB92384.1"/>
    <property type="status" value="JOINED"/>
    <property type="molecule type" value="Genomic_DNA"/>
</dbReference>
<dbReference type="EMBL" id="U15785">
    <property type="protein sequence ID" value="AAB92384.1"/>
    <property type="status" value="JOINED"/>
    <property type="molecule type" value="Genomic_DNA"/>
</dbReference>
<dbReference type="EMBL" id="U15786">
    <property type="protein sequence ID" value="AAB92384.1"/>
    <property type="status" value="JOINED"/>
    <property type="molecule type" value="Genomic_DNA"/>
</dbReference>
<dbReference type="EMBL" id="U15787">
    <property type="protein sequence ID" value="AAB92384.1"/>
    <property type="status" value="JOINED"/>
    <property type="molecule type" value="Genomic_DNA"/>
</dbReference>
<dbReference type="EMBL" id="U15788">
    <property type="protein sequence ID" value="AAB92384.1"/>
    <property type="status" value="JOINED"/>
    <property type="molecule type" value="Genomic_DNA"/>
</dbReference>
<dbReference type="EMBL" id="U15789">
    <property type="protein sequence ID" value="AAB92384.1"/>
    <property type="status" value="JOINED"/>
    <property type="molecule type" value="Genomic_DNA"/>
</dbReference>
<dbReference type="EMBL" id="U14910">
    <property type="protein sequence ID" value="AAA56748.1"/>
    <property type="molecule type" value="mRNA"/>
</dbReference>
<dbReference type="EMBL" id="AC022389">
    <property type="status" value="NOT_ANNOTATED_CDS"/>
    <property type="molecule type" value="Genomic_DNA"/>
</dbReference>
<dbReference type="EMBL" id="BG912392">
    <property type="status" value="NOT_ANNOTATED_CDS"/>
    <property type="molecule type" value="mRNA"/>
</dbReference>
<dbReference type="EMBL" id="BC011349">
    <property type="protein sequence ID" value="AAH11349.1"/>
    <property type="molecule type" value="mRNA"/>
</dbReference>
<dbReference type="CCDS" id="CCDS41543.1">
    <molecule id="P47804-3"/>
</dbReference>
<dbReference type="CCDS" id="CCDS7374.1">
    <molecule id="P47804-2"/>
</dbReference>
<dbReference type="CCDS" id="CCDS91288.1">
    <molecule id="P47804-1"/>
</dbReference>
<dbReference type="PIR" id="A55980">
    <property type="entry name" value="A55980"/>
</dbReference>
<dbReference type="PIR" id="B55980">
    <property type="entry name" value="B55980"/>
</dbReference>
<dbReference type="RefSeq" id="NP_001012738.1">
    <molecule id="P47804-1"/>
    <property type="nucleotide sequence ID" value="NM_001012720.2"/>
</dbReference>
<dbReference type="RefSeq" id="NP_001012740.1">
    <molecule id="P47804-3"/>
    <property type="nucleotide sequence ID" value="NM_001012722.2"/>
</dbReference>
<dbReference type="RefSeq" id="NP_002912.2">
    <molecule id="P47804-2"/>
    <property type="nucleotide sequence ID" value="NM_002921.3"/>
</dbReference>
<dbReference type="SMR" id="P47804"/>
<dbReference type="BioGRID" id="111927">
    <property type="interactions" value="10"/>
</dbReference>
<dbReference type="FunCoup" id="P47804">
    <property type="interactions" value="284"/>
</dbReference>
<dbReference type="IntAct" id="P47804">
    <property type="interactions" value="30"/>
</dbReference>
<dbReference type="MINT" id="P47804"/>
<dbReference type="STRING" id="9606.ENSP00000352427"/>
<dbReference type="GlyCosmos" id="P47804">
    <property type="glycosylation" value="1 site, No reported glycans"/>
</dbReference>
<dbReference type="GlyGen" id="P47804">
    <property type="glycosylation" value="1 site"/>
</dbReference>
<dbReference type="iPTMnet" id="P47804"/>
<dbReference type="PhosphoSitePlus" id="P47804"/>
<dbReference type="BioMuta" id="RGR"/>
<dbReference type="DMDM" id="1350592"/>
<dbReference type="MassIVE" id="P47804"/>
<dbReference type="PaxDb" id="9606-ENSP00000352427"/>
<dbReference type="PeptideAtlas" id="P47804"/>
<dbReference type="ProteomicsDB" id="55796">
    <molecule id="P47804-1"/>
</dbReference>
<dbReference type="ProteomicsDB" id="55797">
    <molecule id="P47804-2"/>
</dbReference>
<dbReference type="ProteomicsDB" id="55798">
    <molecule id="P47804-3"/>
</dbReference>
<dbReference type="Antibodypedia" id="15900">
    <property type="antibodies" value="221 antibodies from 29 providers"/>
</dbReference>
<dbReference type="DNASU" id="5995"/>
<dbReference type="Ensembl" id="ENST00000358110.7">
    <molecule id="P47804-3"/>
    <property type="protein sequence ID" value="ENSP00000350823.5"/>
    <property type="gene ID" value="ENSG00000148604.15"/>
</dbReference>
<dbReference type="Ensembl" id="ENST00000359452.9">
    <molecule id="P47804-2"/>
    <property type="protein sequence ID" value="ENSP00000352427.4"/>
    <property type="gene ID" value="ENSG00000148604.15"/>
</dbReference>
<dbReference type="Ensembl" id="ENST00000652092.2">
    <molecule id="P47804-1"/>
    <property type="protein sequence ID" value="ENSP00000498299.1"/>
    <property type="gene ID" value="ENSG00000148604.15"/>
</dbReference>
<dbReference type="GeneID" id="5995"/>
<dbReference type="KEGG" id="hsa:5995"/>
<dbReference type="MANE-Select" id="ENST00000652092.2">
    <property type="protein sequence ID" value="ENSP00000498299.1"/>
    <property type="RefSeq nucleotide sequence ID" value="NM_001012720.2"/>
    <property type="RefSeq protein sequence ID" value="NP_001012738.1"/>
</dbReference>
<dbReference type="UCSC" id="uc001kdd.2">
    <molecule id="P47804-1"/>
    <property type="organism name" value="human"/>
</dbReference>
<dbReference type="AGR" id="HGNC:9990"/>
<dbReference type="CTD" id="5995"/>
<dbReference type="DisGeNET" id="5995"/>
<dbReference type="GeneCards" id="RGR"/>
<dbReference type="GeneReviews" id="RGR"/>
<dbReference type="HGNC" id="HGNC:9990">
    <property type="gene designation" value="RGR"/>
</dbReference>
<dbReference type="HPA" id="ENSG00000148604">
    <property type="expression patterns" value="Tissue enriched (retina)"/>
</dbReference>
<dbReference type="MalaCards" id="RGR"/>
<dbReference type="MIM" id="600342">
    <property type="type" value="gene"/>
</dbReference>
<dbReference type="MIM" id="613769">
    <property type="type" value="phenotype"/>
</dbReference>
<dbReference type="neXtProt" id="NX_P47804"/>
<dbReference type="OpenTargets" id="ENSG00000148604"/>
<dbReference type="Orphanet" id="791">
    <property type="disease" value="Retinitis pigmentosa"/>
</dbReference>
<dbReference type="PharmGKB" id="PA34360"/>
<dbReference type="VEuPathDB" id="HostDB:ENSG00000148604"/>
<dbReference type="eggNOG" id="KOG3656">
    <property type="taxonomic scope" value="Eukaryota"/>
</dbReference>
<dbReference type="GeneTree" id="ENSGT01130000278323"/>
<dbReference type="HOGENOM" id="CLU_009579_3_2_1"/>
<dbReference type="InParanoid" id="P47804"/>
<dbReference type="OMA" id="KYRMIPA"/>
<dbReference type="OrthoDB" id="10015560at2759"/>
<dbReference type="PAN-GO" id="P47804">
    <property type="GO annotations" value="6 GO annotations based on evolutionary models"/>
</dbReference>
<dbReference type="PhylomeDB" id="P47804"/>
<dbReference type="TreeFam" id="TF324998"/>
<dbReference type="PathwayCommons" id="P47804"/>
<dbReference type="Reactome" id="R-HSA-418594">
    <property type="pathway name" value="G alpha (i) signalling events"/>
</dbReference>
<dbReference type="Reactome" id="R-HSA-419771">
    <property type="pathway name" value="Opsins"/>
</dbReference>
<dbReference type="SignaLink" id="P47804"/>
<dbReference type="BioGRID-ORCS" id="5995">
    <property type="hits" value="11 hits in 1140 CRISPR screens"/>
</dbReference>
<dbReference type="ChiTaRS" id="RGR">
    <property type="organism name" value="human"/>
</dbReference>
<dbReference type="GeneWiki" id="Retinal_G_protein_coupled_receptor"/>
<dbReference type="GenomeRNAi" id="5995"/>
<dbReference type="Pharos" id="P47804">
    <property type="development level" value="Tbio"/>
</dbReference>
<dbReference type="PRO" id="PR:P47804"/>
<dbReference type="Proteomes" id="UP000005640">
    <property type="component" value="Chromosome 10"/>
</dbReference>
<dbReference type="RNAct" id="P47804">
    <property type="molecule type" value="protein"/>
</dbReference>
<dbReference type="Bgee" id="ENSG00000148604">
    <property type="expression patterns" value="Expressed in pigmented layer of retina and 119 other cell types or tissues"/>
</dbReference>
<dbReference type="ExpressionAtlas" id="P47804">
    <property type="expression patterns" value="baseline and differential"/>
</dbReference>
<dbReference type="GO" id="GO:0005886">
    <property type="term" value="C:plasma membrane"/>
    <property type="evidence" value="ECO:0000318"/>
    <property type="project" value="GO_Central"/>
</dbReference>
<dbReference type="GO" id="GO:0008020">
    <property type="term" value="F:G protein-coupled photoreceptor activity"/>
    <property type="evidence" value="ECO:0000318"/>
    <property type="project" value="GO_Central"/>
</dbReference>
<dbReference type="GO" id="GO:0004930">
    <property type="term" value="F:G protein-coupled receptor activity"/>
    <property type="evidence" value="ECO:0000304"/>
    <property type="project" value="ProtInc"/>
</dbReference>
<dbReference type="GO" id="GO:0071482">
    <property type="term" value="P:cellular response to light stimulus"/>
    <property type="evidence" value="ECO:0000318"/>
    <property type="project" value="GO_Central"/>
</dbReference>
<dbReference type="GO" id="GO:0007186">
    <property type="term" value="P:G protein-coupled receptor signaling pathway"/>
    <property type="evidence" value="ECO:0000318"/>
    <property type="project" value="GO_Central"/>
</dbReference>
<dbReference type="GO" id="GO:0007602">
    <property type="term" value="P:phototransduction"/>
    <property type="evidence" value="ECO:0000318"/>
    <property type="project" value="GO_Central"/>
</dbReference>
<dbReference type="GO" id="GO:0007601">
    <property type="term" value="P:visual perception"/>
    <property type="evidence" value="ECO:0000304"/>
    <property type="project" value="ProtInc"/>
</dbReference>
<dbReference type="CDD" id="cd15072">
    <property type="entry name" value="7tmA_Retinal_GPR"/>
    <property type="match status" value="1"/>
</dbReference>
<dbReference type="FunFam" id="1.20.1070.10:FF:000139">
    <property type="entry name" value="RPE-retinal G protein-coupled receptor isoform X1"/>
    <property type="match status" value="1"/>
</dbReference>
<dbReference type="Gene3D" id="1.20.1070.10">
    <property type="entry name" value="Rhodopsin 7-helix transmembrane proteins"/>
    <property type="match status" value="1"/>
</dbReference>
<dbReference type="InterPro" id="IPR050125">
    <property type="entry name" value="GPCR_opsins"/>
</dbReference>
<dbReference type="InterPro" id="IPR000276">
    <property type="entry name" value="GPCR_Rhodpsn"/>
</dbReference>
<dbReference type="InterPro" id="IPR017452">
    <property type="entry name" value="GPCR_Rhodpsn_7TM"/>
</dbReference>
<dbReference type="InterPro" id="IPR027430">
    <property type="entry name" value="Retinal_BS"/>
</dbReference>
<dbReference type="InterPro" id="IPR001793">
    <property type="entry name" value="RPE_GPCR"/>
</dbReference>
<dbReference type="PANTHER" id="PTHR24240">
    <property type="entry name" value="OPSIN"/>
    <property type="match status" value="1"/>
</dbReference>
<dbReference type="Pfam" id="PF00001">
    <property type="entry name" value="7tm_1"/>
    <property type="match status" value="1"/>
</dbReference>
<dbReference type="PRINTS" id="PR00237">
    <property type="entry name" value="GPCRRHODOPSN"/>
</dbReference>
<dbReference type="PRINTS" id="PR00667">
    <property type="entry name" value="RPERETINALR"/>
</dbReference>
<dbReference type="SUPFAM" id="SSF81321">
    <property type="entry name" value="Family A G protein-coupled receptor-like"/>
    <property type="match status" value="1"/>
</dbReference>
<dbReference type="PROSITE" id="PS50262">
    <property type="entry name" value="G_PROTEIN_RECEP_F1_2"/>
    <property type="match status" value="1"/>
</dbReference>
<dbReference type="PROSITE" id="PS00238">
    <property type="entry name" value="OPSIN"/>
    <property type="match status" value="1"/>
</dbReference>
<reference key="1">
    <citation type="journal article" date="1994" name="Biochemistry">
        <title>A human opsin-related gene that encodes a retinaldehyde-binding protein.</title>
        <authorList>
            <person name="Shen D."/>
            <person name="Jiang M."/>
            <person name="Hao W."/>
            <person name="Tao L."/>
            <person name="Salazar M."/>
            <person name="Fong H.K.W."/>
        </authorList>
    </citation>
    <scope>NUCLEOTIDE SEQUENCE [GENOMIC DNA / MRNA] (ISOFORMS 1 AND 2)</scope>
    <source>
        <tissue>Retina</tissue>
    </source>
</reference>
<reference key="2">
    <citation type="journal article" date="2004" name="Nature">
        <title>The DNA sequence and comparative analysis of human chromosome 10.</title>
        <authorList>
            <person name="Deloukas P."/>
            <person name="Earthrowl M.E."/>
            <person name="Grafham D.V."/>
            <person name="Rubenfield M."/>
            <person name="French L."/>
            <person name="Steward C.A."/>
            <person name="Sims S.K."/>
            <person name="Jones M.C."/>
            <person name="Searle S."/>
            <person name="Scott C."/>
            <person name="Howe K."/>
            <person name="Hunt S.E."/>
            <person name="Andrews T.D."/>
            <person name="Gilbert J.G.R."/>
            <person name="Swarbreck D."/>
            <person name="Ashurst J.L."/>
            <person name="Taylor A."/>
            <person name="Battles J."/>
            <person name="Bird C.P."/>
            <person name="Ainscough R."/>
            <person name="Almeida J.P."/>
            <person name="Ashwell R.I.S."/>
            <person name="Ambrose K.D."/>
            <person name="Babbage A.K."/>
            <person name="Bagguley C.L."/>
            <person name="Bailey J."/>
            <person name="Banerjee R."/>
            <person name="Bates K."/>
            <person name="Beasley H."/>
            <person name="Bray-Allen S."/>
            <person name="Brown A.J."/>
            <person name="Brown J.Y."/>
            <person name="Burford D.C."/>
            <person name="Burrill W."/>
            <person name="Burton J."/>
            <person name="Cahill P."/>
            <person name="Camire D."/>
            <person name="Carter N.P."/>
            <person name="Chapman J.C."/>
            <person name="Clark S.Y."/>
            <person name="Clarke G."/>
            <person name="Clee C.M."/>
            <person name="Clegg S."/>
            <person name="Corby N."/>
            <person name="Coulson A."/>
            <person name="Dhami P."/>
            <person name="Dutta I."/>
            <person name="Dunn M."/>
            <person name="Faulkner L."/>
            <person name="Frankish A."/>
            <person name="Frankland J.A."/>
            <person name="Garner P."/>
            <person name="Garnett J."/>
            <person name="Gribble S."/>
            <person name="Griffiths C."/>
            <person name="Grocock R."/>
            <person name="Gustafson E."/>
            <person name="Hammond S."/>
            <person name="Harley J.L."/>
            <person name="Hart E."/>
            <person name="Heath P.D."/>
            <person name="Ho T.P."/>
            <person name="Hopkins B."/>
            <person name="Horne J."/>
            <person name="Howden P.J."/>
            <person name="Huckle E."/>
            <person name="Hynds C."/>
            <person name="Johnson C."/>
            <person name="Johnson D."/>
            <person name="Kana A."/>
            <person name="Kay M."/>
            <person name="Kimberley A.M."/>
            <person name="Kershaw J.K."/>
            <person name="Kokkinaki M."/>
            <person name="Laird G.K."/>
            <person name="Lawlor S."/>
            <person name="Lee H.M."/>
            <person name="Leongamornlert D.A."/>
            <person name="Laird G."/>
            <person name="Lloyd C."/>
            <person name="Lloyd D.M."/>
            <person name="Loveland J."/>
            <person name="Lovell J."/>
            <person name="McLaren S."/>
            <person name="McLay K.E."/>
            <person name="McMurray A."/>
            <person name="Mashreghi-Mohammadi M."/>
            <person name="Matthews L."/>
            <person name="Milne S."/>
            <person name="Nickerson T."/>
            <person name="Nguyen M."/>
            <person name="Overton-Larty E."/>
            <person name="Palmer S.A."/>
            <person name="Pearce A.V."/>
            <person name="Peck A.I."/>
            <person name="Pelan S."/>
            <person name="Phillimore B."/>
            <person name="Porter K."/>
            <person name="Rice C.M."/>
            <person name="Rogosin A."/>
            <person name="Ross M.T."/>
            <person name="Sarafidou T."/>
            <person name="Sehra H.K."/>
            <person name="Shownkeen R."/>
            <person name="Skuce C.D."/>
            <person name="Smith M."/>
            <person name="Standring L."/>
            <person name="Sycamore N."/>
            <person name="Tester J."/>
            <person name="Thorpe A."/>
            <person name="Torcasso W."/>
            <person name="Tracey A."/>
            <person name="Tromans A."/>
            <person name="Tsolas J."/>
            <person name="Wall M."/>
            <person name="Walsh J."/>
            <person name="Wang H."/>
            <person name="Weinstock K."/>
            <person name="West A.P."/>
            <person name="Willey D.L."/>
            <person name="Whitehead S.L."/>
            <person name="Wilming L."/>
            <person name="Wray P.W."/>
            <person name="Young L."/>
            <person name="Chen Y."/>
            <person name="Lovering R.C."/>
            <person name="Moschonas N.K."/>
            <person name="Siebert R."/>
            <person name="Fechtel K."/>
            <person name="Bentley D."/>
            <person name="Durbin R.M."/>
            <person name="Hubbard T."/>
            <person name="Doucette-Stamm L."/>
            <person name="Beck S."/>
            <person name="Smith D.R."/>
            <person name="Rogers J."/>
        </authorList>
    </citation>
    <scope>NUCLEOTIDE SEQUENCE [LARGE SCALE GENOMIC DNA]</scope>
</reference>
<reference key="3">
    <citation type="journal article" date="2004" name="Genome Res.">
        <title>The status, quality, and expansion of the NIH full-length cDNA project: the Mammalian Gene Collection (MGC).</title>
        <authorList>
            <consortium name="The MGC Project Team"/>
        </authorList>
    </citation>
    <scope>NUCLEOTIDE SEQUENCE [LARGE SCALE MRNA] (ISOFORM 2)</scope>
    <scope>NUCLEOTIDE SEQUENCE [LARGE SCALE MRNA] OF 1-265 (ISOFORM 3)</scope>
    <source>
        <tissue>Brain</tissue>
    </source>
</reference>
<reference key="4">
    <citation type="journal article" date="1999" name="Nat. Genet.">
        <title>Mutations in RGR, encoding a light-sensitive opsin homologue, in patients with retinitis pigmentosa.</title>
        <authorList>
            <person name="Morimura H."/>
            <person name="Saindelle-Ribeaudeau F."/>
            <person name="Berson E.L."/>
            <person name="Dryja T.P."/>
        </authorList>
    </citation>
    <scope>VARIANT RP44 ARG-66</scope>
    <scope>VARIANTS LEU-132; ASN-152; THR-234 AND PHE-241</scope>
</reference>
<organism>
    <name type="scientific">Homo sapiens</name>
    <name type="common">Human</name>
    <dbReference type="NCBI Taxonomy" id="9606"/>
    <lineage>
        <taxon>Eukaryota</taxon>
        <taxon>Metazoa</taxon>
        <taxon>Chordata</taxon>
        <taxon>Craniata</taxon>
        <taxon>Vertebrata</taxon>
        <taxon>Euteleostomi</taxon>
        <taxon>Mammalia</taxon>
        <taxon>Eutheria</taxon>
        <taxon>Euarchontoglires</taxon>
        <taxon>Primates</taxon>
        <taxon>Haplorrhini</taxon>
        <taxon>Catarrhini</taxon>
        <taxon>Hominidae</taxon>
        <taxon>Homo</taxon>
    </lineage>
</organism>
<proteinExistence type="evidence at protein level"/>
<gene>
    <name type="primary">RGR</name>
</gene>
<feature type="chain" id="PRO_0000197822" description="RPE-retinal G protein-coupled receptor">
    <location>
        <begin position="1"/>
        <end position="291"/>
    </location>
</feature>
<feature type="topological domain" description="Extracellular" evidence="2">
    <location>
        <begin position="1"/>
        <end position="15"/>
    </location>
</feature>
<feature type="transmembrane region" description="Helical; Name=1" evidence="2">
    <location>
        <begin position="16"/>
        <end position="36"/>
    </location>
</feature>
<feature type="topological domain" description="Cytoplasmic" evidence="2">
    <location>
        <begin position="37"/>
        <end position="52"/>
    </location>
</feature>
<feature type="transmembrane region" description="Helical; Name=2" evidence="2">
    <location>
        <begin position="53"/>
        <end position="73"/>
    </location>
</feature>
<feature type="topological domain" description="Extracellular" evidence="2">
    <location>
        <begin position="74"/>
        <end position="91"/>
    </location>
</feature>
<feature type="transmembrane region" description="Helical; Name=3" evidence="2">
    <location>
        <begin position="92"/>
        <end position="112"/>
    </location>
</feature>
<feature type="topological domain" description="Cytoplasmic" evidence="2">
    <location>
        <begin position="113"/>
        <end position="130"/>
    </location>
</feature>
<feature type="transmembrane region" description="Helical; Name=4" evidence="2">
    <location>
        <begin position="131"/>
        <end position="151"/>
    </location>
</feature>
<feature type="topological domain" description="Extracellular" evidence="2">
    <location>
        <begin position="152"/>
        <end position="175"/>
    </location>
</feature>
<feature type="transmembrane region" description="Helical; Name=5" evidence="2">
    <location>
        <begin position="176"/>
        <end position="196"/>
    </location>
</feature>
<feature type="topological domain" description="Cytoplasmic" evidence="2">
    <location>
        <begin position="197"/>
        <end position="219"/>
    </location>
</feature>
<feature type="transmembrane region" description="Helical; Name=6" evidence="2">
    <location>
        <begin position="220"/>
        <end position="240"/>
    </location>
</feature>
<feature type="topological domain" description="Extracellular" evidence="2">
    <location>
        <begin position="241"/>
        <end position="247"/>
    </location>
</feature>
<feature type="transmembrane region" description="Helical; Name=7" evidence="2">
    <location>
        <begin position="248"/>
        <end position="268"/>
    </location>
</feature>
<feature type="topological domain" description="Cytoplasmic" evidence="2">
    <location>
        <begin position="269"/>
        <end position="291"/>
    </location>
</feature>
<feature type="modified residue" description="N6-(retinylidene)lysine" evidence="1">
    <location>
        <position position="255"/>
    </location>
</feature>
<feature type="glycosylation site" description="N-linked (GlcNAc...) asparagine" evidence="2">
    <location>
        <position position="172"/>
    </location>
</feature>
<feature type="disulfide bond" evidence="3">
    <location>
        <begin position="88"/>
        <end position="162"/>
    </location>
</feature>
<feature type="splice variant" id="VSP_003773" description="In isoform 2." evidence="5 6">
    <original>L</original>
    <variation>LRVSH</variation>
    <location>
        <position position="78"/>
    </location>
</feature>
<feature type="splice variant" id="VSP_038387" description="In isoform 3." evidence="5">
    <location>
        <begin position="211"/>
        <end position="248"/>
    </location>
</feature>
<feature type="sequence variant" id="VAR_017034" description="In RP44; dbSNP:rs104894187." evidence="4">
    <original>S</original>
    <variation>R</variation>
    <location>
        <position position="66"/>
    </location>
</feature>
<feature type="sequence variant" id="VAR_017055" description="In dbSNP:rs370808520." evidence="4">
    <original>V</original>
    <variation>L</variation>
    <location>
        <position position="132"/>
    </location>
</feature>
<feature type="sequence variant" id="VAR_017056" description="In dbSNP:rs150808273." evidence="4">
    <original>H</original>
    <variation>N</variation>
    <location>
        <position position="152"/>
    </location>
</feature>
<feature type="sequence variant" id="VAR_017058" description="In dbSNP:rs377043137." evidence="4">
    <original>A</original>
    <variation>T</variation>
    <location>
        <position position="234"/>
    </location>
</feature>
<feature type="sequence variant" id="VAR_017057" description="In dbSNP:rs61730895." evidence="4">
    <original>S</original>
    <variation>F</variation>
    <location>
        <position position="241"/>
    </location>
</feature>